<organism>
    <name type="scientific">Pongo abelii</name>
    <name type="common">Sumatran orangutan</name>
    <name type="synonym">Pongo pygmaeus abelii</name>
    <dbReference type="NCBI Taxonomy" id="9601"/>
    <lineage>
        <taxon>Eukaryota</taxon>
        <taxon>Metazoa</taxon>
        <taxon>Chordata</taxon>
        <taxon>Craniata</taxon>
        <taxon>Vertebrata</taxon>
        <taxon>Euteleostomi</taxon>
        <taxon>Mammalia</taxon>
        <taxon>Eutheria</taxon>
        <taxon>Euarchontoglires</taxon>
        <taxon>Primates</taxon>
        <taxon>Haplorrhini</taxon>
        <taxon>Catarrhini</taxon>
        <taxon>Hominidae</taxon>
        <taxon>Pongo</taxon>
    </lineage>
</organism>
<name>HMGN3_PONAB</name>
<proteinExistence type="inferred from homology"/>
<gene>
    <name type="primary">HMGN3</name>
</gene>
<reference key="1">
    <citation type="submission" date="2004-11" db="EMBL/GenBank/DDBJ databases">
        <authorList>
            <consortium name="The German cDNA consortium"/>
        </authorList>
    </citation>
    <scope>NUCLEOTIDE SEQUENCE [LARGE SCALE MRNA]</scope>
    <source>
        <tissue>Brain cortex</tissue>
    </source>
</reference>
<evidence type="ECO:0000250" key="1"/>
<evidence type="ECO:0000250" key="2">
    <source>
        <dbReference type="UniProtKB" id="Q15651"/>
    </source>
</evidence>
<evidence type="ECO:0000256" key="3">
    <source>
        <dbReference type="SAM" id="MobiDB-lite"/>
    </source>
</evidence>
<evidence type="ECO:0000305" key="4"/>
<protein>
    <recommendedName>
        <fullName>High mobility group nucleosome-binding domain-containing protein 3</fullName>
    </recommendedName>
</protein>
<accession>Q5R715</accession>
<keyword id="KW-0156">Chromatin regulator</keyword>
<keyword id="KW-0238">DNA-binding</keyword>
<keyword id="KW-0539">Nucleus</keyword>
<keyword id="KW-0597">Phosphoprotein</keyword>
<keyword id="KW-1185">Reference proteome</keyword>
<feature type="chain" id="PRO_0000232576" description="High mobility group nucleosome-binding domain-containing protein 3">
    <location>
        <begin position="1"/>
        <end position="99"/>
    </location>
</feature>
<feature type="region of interest" description="Disordered" evidence="3">
    <location>
        <begin position="1"/>
        <end position="99"/>
    </location>
</feature>
<feature type="compositionally biased region" description="Basic and acidic residues" evidence="3">
    <location>
        <begin position="1"/>
        <end position="25"/>
    </location>
</feature>
<feature type="compositionally biased region" description="Basic and acidic residues" evidence="3">
    <location>
        <begin position="39"/>
        <end position="53"/>
    </location>
</feature>
<feature type="compositionally biased region" description="Basic and acidic residues" evidence="3">
    <location>
        <begin position="62"/>
        <end position="72"/>
    </location>
</feature>
<feature type="compositionally biased region" description="Basic and acidic residues" evidence="3">
    <location>
        <begin position="81"/>
        <end position="93"/>
    </location>
</feature>
<feature type="modified residue" description="Phosphoserine" evidence="2">
    <location>
        <position position="6"/>
    </location>
</feature>
<feature type="modified residue" description="Phosphothreonine" evidence="2">
    <location>
        <position position="10"/>
    </location>
</feature>
<feature type="modified residue" description="Phosphoserine" evidence="2">
    <location>
        <position position="78"/>
    </location>
</feature>
<feature type="modified residue" description="Phosphoserine" evidence="2">
    <location>
        <position position="93"/>
    </location>
</feature>
<sequence>MPKRKSPENTEDKDGSKVTKQEPTRRSARLSAKPAPPKPEPKPRKTSAKKEPGAKISRGAKGKKEEKQEAGKEGTAPSENGETKAEEAQKTESVDNEGE</sequence>
<dbReference type="EMBL" id="CR860308">
    <property type="protein sequence ID" value="CAH92445.1"/>
    <property type="molecule type" value="Transcribed_RNA"/>
</dbReference>
<dbReference type="RefSeq" id="XP_009240293.1">
    <property type="nucleotide sequence ID" value="XM_009242018.3"/>
</dbReference>
<dbReference type="FunCoup" id="Q5R715">
    <property type="interactions" value="1833"/>
</dbReference>
<dbReference type="STRING" id="9601.ENSPPYP00000018795"/>
<dbReference type="GeneID" id="100172109"/>
<dbReference type="CTD" id="9324"/>
<dbReference type="eggNOG" id="ENOG502S60V">
    <property type="taxonomic scope" value="Eukaryota"/>
</dbReference>
<dbReference type="InParanoid" id="Q5R715"/>
<dbReference type="OrthoDB" id="8956258at2759"/>
<dbReference type="Proteomes" id="UP000001595">
    <property type="component" value="Unplaced"/>
</dbReference>
<dbReference type="GO" id="GO:0000785">
    <property type="term" value="C:chromatin"/>
    <property type="evidence" value="ECO:0007669"/>
    <property type="project" value="InterPro"/>
</dbReference>
<dbReference type="GO" id="GO:0005634">
    <property type="term" value="C:nucleus"/>
    <property type="evidence" value="ECO:0007669"/>
    <property type="project" value="UniProtKB-SubCell"/>
</dbReference>
<dbReference type="GO" id="GO:0031492">
    <property type="term" value="F:nucleosomal DNA binding"/>
    <property type="evidence" value="ECO:0007669"/>
    <property type="project" value="InterPro"/>
</dbReference>
<dbReference type="GO" id="GO:0006325">
    <property type="term" value="P:chromatin organization"/>
    <property type="evidence" value="ECO:0007669"/>
    <property type="project" value="UniProtKB-KW"/>
</dbReference>
<dbReference type="InterPro" id="IPR000079">
    <property type="entry name" value="HMGN_fam"/>
</dbReference>
<dbReference type="PANTHER" id="PTHR23087:SF2">
    <property type="entry name" value="HIGH MOBILITY GROUP NUCLEOSOME-BINDING DOMAIN-CONTAINING PROTEIN 3"/>
    <property type="match status" value="1"/>
</dbReference>
<dbReference type="PANTHER" id="PTHR23087">
    <property type="entry name" value="NONHISTONE CHROMOSOMAL PROTEIN HMG"/>
    <property type="match status" value="1"/>
</dbReference>
<dbReference type="Pfam" id="PF01101">
    <property type="entry name" value="HMG14_17"/>
    <property type="match status" value="1"/>
</dbReference>
<dbReference type="PRINTS" id="PR00925">
    <property type="entry name" value="NONHISHMG17"/>
</dbReference>
<dbReference type="SMART" id="SM00527">
    <property type="entry name" value="HMG17"/>
    <property type="match status" value="1"/>
</dbReference>
<dbReference type="PROSITE" id="PS00355">
    <property type="entry name" value="HMG14_17"/>
    <property type="match status" value="1"/>
</dbReference>
<comment type="function">
    <text evidence="1">Binds to nucleosomes, regulating chromatin structure and consequently, chromatin-dependent processes such as transcription, DNA replication and DNA repair. Affects both insulin and glucagon levels and modulates the expression of pancreatic genes involved in insulin secretion. Regulates the expression of the glucose transporter SLC2A2 by binding specifically to its promoter region and recruiting PDX1 and additional transcription factors. Regulates the expression of SLC6A9, a glycine transporter which regulates the glycine concentration in synaptic junctions in the central nervous system, by binding to its transcription start site. May play a role in ocular development and astrocyte function (By similarity).</text>
</comment>
<comment type="subunit">
    <text evidence="2">Interacts with the ligand binding domain of the thyroid receptor (TR) (in vitro). Requires the presence of thyroid hormone for its interaction. Interacts with transcriptional regulator SEHBP. Interacts with nucleosomes.</text>
</comment>
<comment type="subcellular location">
    <subcellularLocation>
        <location evidence="1">Nucleus</location>
    </subcellularLocation>
</comment>
<comment type="similarity">
    <text evidence="4">Belongs to the HMGN family.</text>
</comment>